<comment type="function">
    <text evidence="1">Required for disulfide bond formation in some periplasmic proteins. Acts by oxidizing the DsbA protein.</text>
</comment>
<comment type="subcellular location">
    <subcellularLocation>
        <location evidence="1">Cell inner membrane</location>
        <topology evidence="1">Multi-pass membrane protein</topology>
    </subcellularLocation>
</comment>
<comment type="similarity">
    <text evidence="1">Belongs to the DsbB family.</text>
</comment>
<accession>A0KVP7</accession>
<sequence length="175" mass="19329">MTAFTRFAHSRASWFILTGSAIALEAAALYFQYVMKLDPCVMCIYQRLAVFGILASGLIGMTAPKFLIVRILGAIGWAVSATWGLKLALALVDMQNNPSPFSTCSFLPEFPAWMPLHEWFPSVMLPTGMCTDVPWQFMGVTMAEWMVVAFSGYLVALLLFIVPILSGSNKPSLYK</sequence>
<evidence type="ECO:0000255" key="1">
    <source>
        <dbReference type="HAMAP-Rule" id="MF_00286"/>
    </source>
</evidence>
<feature type="chain" id="PRO_0000298410" description="Disulfide bond formation protein B">
    <location>
        <begin position="1"/>
        <end position="175"/>
    </location>
</feature>
<feature type="topological domain" description="Cytoplasmic" evidence="1">
    <location>
        <begin position="1"/>
        <end position="13"/>
    </location>
</feature>
<feature type="transmembrane region" description="Helical" evidence="1">
    <location>
        <begin position="14"/>
        <end position="30"/>
    </location>
</feature>
<feature type="topological domain" description="Periplasmic" evidence="1">
    <location>
        <begin position="31"/>
        <end position="48"/>
    </location>
</feature>
<feature type="transmembrane region" description="Helical" evidence="1">
    <location>
        <begin position="49"/>
        <end position="64"/>
    </location>
</feature>
<feature type="topological domain" description="Cytoplasmic" evidence="1">
    <location>
        <begin position="65"/>
        <end position="71"/>
    </location>
</feature>
<feature type="transmembrane region" description="Helical" evidence="1">
    <location>
        <begin position="72"/>
        <end position="89"/>
    </location>
</feature>
<feature type="topological domain" description="Periplasmic" evidence="1">
    <location>
        <begin position="90"/>
        <end position="144"/>
    </location>
</feature>
<feature type="transmembrane region" description="Helical" evidence="1">
    <location>
        <begin position="145"/>
        <end position="163"/>
    </location>
</feature>
<feature type="topological domain" description="Cytoplasmic" evidence="1">
    <location>
        <begin position="164"/>
        <end position="175"/>
    </location>
</feature>
<feature type="disulfide bond" description="Redox-active" evidence="1">
    <location>
        <begin position="40"/>
        <end position="43"/>
    </location>
</feature>
<feature type="disulfide bond" description="Redox-active" evidence="1">
    <location>
        <begin position="104"/>
        <end position="130"/>
    </location>
</feature>
<protein>
    <recommendedName>
        <fullName evidence="1">Disulfide bond formation protein B</fullName>
    </recommendedName>
    <alternativeName>
        <fullName evidence="1">Disulfide oxidoreductase</fullName>
    </alternativeName>
</protein>
<reference key="1">
    <citation type="submission" date="2006-09" db="EMBL/GenBank/DDBJ databases">
        <title>Complete sequence of chromosome 1 of Shewanella sp. ANA-3.</title>
        <authorList>
            <person name="Copeland A."/>
            <person name="Lucas S."/>
            <person name="Lapidus A."/>
            <person name="Barry K."/>
            <person name="Detter J.C."/>
            <person name="Glavina del Rio T."/>
            <person name="Hammon N."/>
            <person name="Israni S."/>
            <person name="Dalin E."/>
            <person name="Tice H."/>
            <person name="Pitluck S."/>
            <person name="Chertkov O."/>
            <person name="Brettin T."/>
            <person name="Bruce D."/>
            <person name="Han C."/>
            <person name="Tapia R."/>
            <person name="Gilna P."/>
            <person name="Schmutz J."/>
            <person name="Larimer F."/>
            <person name="Land M."/>
            <person name="Hauser L."/>
            <person name="Kyrpides N."/>
            <person name="Kim E."/>
            <person name="Newman D."/>
            <person name="Salticov C."/>
            <person name="Konstantinidis K."/>
            <person name="Klappenback J."/>
            <person name="Tiedje J."/>
            <person name="Richardson P."/>
        </authorList>
    </citation>
    <scope>NUCLEOTIDE SEQUENCE [LARGE SCALE GENOMIC DNA]</scope>
    <source>
        <strain>ANA-3</strain>
    </source>
</reference>
<keyword id="KW-0997">Cell inner membrane</keyword>
<keyword id="KW-1003">Cell membrane</keyword>
<keyword id="KW-0143">Chaperone</keyword>
<keyword id="KW-1015">Disulfide bond</keyword>
<keyword id="KW-0249">Electron transport</keyword>
<keyword id="KW-0472">Membrane</keyword>
<keyword id="KW-0560">Oxidoreductase</keyword>
<keyword id="KW-0676">Redox-active center</keyword>
<keyword id="KW-0812">Transmembrane</keyword>
<keyword id="KW-1133">Transmembrane helix</keyword>
<keyword id="KW-0813">Transport</keyword>
<proteinExistence type="inferred from homology"/>
<dbReference type="EMBL" id="CP000469">
    <property type="protein sequence ID" value="ABK47866.1"/>
    <property type="molecule type" value="Genomic_DNA"/>
</dbReference>
<dbReference type="RefSeq" id="WP_011716669.1">
    <property type="nucleotide sequence ID" value="NC_008577.1"/>
</dbReference>
<dbReference type="STRING" id="94122.Shewana3_1633"/>
<dbReference type="GeneID" id="94727626"/>
<dbReference type="KEGG" id="shn:Shewana3_1633"/>
<dbReference type="eggNOG" id="COG1495">
    <property type="taxonomic scope" value="Bacteria"/>
</dbReference>
<dbReference type="HOGENOM" id="CLU_098660_2_0_6"/>
<dbReference type="OrthoDB" id="3711263at2"/>
<dbReference type="Proteomes" id="UP000002589">
    <property type="component" value="Chromosome"/>
</dbReference>
<dbReference type="GO" id="GO:0005886">
    <property type="term" value="C:plasma membrane"/>
    <property type="evidence" value="ECO:0007669"/>
    <property type="project" value="UniProtKB-SubCell"/>
</dbReference>
<dbReference type="GO" id="GO:0009055">
    <property type="term" value="F:electron transfer activity"/>
    <property type="evidence" value="ECO:0007669"/>
    <property type="project" value="UniProtKB-UniRule"/>
</dbReference>
<dbReference type="GO" id="GO:0015035">
    <property type="term" value="F:protein-disulfide reductase activity"/>
    <property type="evidence" value="ECO:0007669"/>
    <property type="project" value="UniProtKB-UniRule"/>
</dbReference>
<dbReference type="GO" id="GO:0006457">
    <property type="term" value="P:protein folding"/>
    <property type="evidence" value="ECO:0007669"/>
    <property type="project" value="InterPro"/>
</dbReference>
<dbReference type="FunFam" id="1.20.1550.10:FF:000006">
    <property type="entry name" value="Disulfide bond formation protein B"/>
    <property type="match status" value="1"/>
</dbReference>
<dbReference type="Gene3D" id="1.20.1550.10">
    <property type="entry name" value="DsbB-like"/>
    <property type="match status" value="1"/>
</dbReference>
<dbReference type="HAMAP" id="MF_00286">
    <property type="entry name" value="DsbB"/>
    <property type="match status" value="1"/>
</dbReference>
<dbReference type="InterPro" id="IPR003752">
    <property type="entry name" value="DiS_bond_form_DsbB/BdbC"/>
</dbReference>
<dbReference type="InterPro" id="IPR022920">
    <property type="entry name" value="Disulphide_bond_form_DsbB"/>
</dbReference>
<dbReference type="InterPro" id="IPR050183">
    <property type="entry name" value="DsbB"/>
</dbReference>
<dbReference type="InterPro" id="IPR023380">
    <property type="entry name" value="DsbB-like_sf"/>
</dbReference>
<dbReference type="NCBIfam" id="NF002485">
    <property type="entry name" value="PRK01749.1"/>
    <property type="match status" value="1"/>
</dbReference>
<dbReference type="PANTHER" id="PTHR36570">
    <property type="entry name" value="DISULFIDE BOND FORMATION PROTEIN B"/>
    <property type="match status" value="1"/>
</dbReference>
<dbReference type="PANTHER" id="PTHR36570:SF2">
    <property type="entry name" value="DISULFIDE BOND FORMATION PROTEIN B"/>
    <property type="match status" value="1"/>
</dbReference>
<dbReference type="Pfam" id="PF02600">
    <property type="entry name" value="DsbB"/>
    <property type="match status" value="1"/>
</dbReference>
<dbReference type="SUPFAM" id="SSF158442">
    <property type="entry name" value="DsbB-like"/>
    <property type="match status" value="1"/>
</dbReference>
<gene>
    <name evidence="1" type="primary">dsbB</name>
    <name type="ordered locus">Shewana3_1633</name>
</gene>
<name>DSBB_SHESA</name>
<organism>
    <name type="scientific">Shewanella sp. (strain ANA-3)</name>
    <dbReference type="NCBI Taxonomy" id="94122"/>
    <lineage>
        <taxon>Bacteria</taxon>
        <taxon>Pseudomonadati</taxon>
        <taxon>Pseudomonadota</taxon>
        <taxon>Gammaproteobacteria</taxon>
        <taxon>Alteromonadales</taxon>
        <taxon>Shewanellaceae</taxon>
        <taxon>Shewanella</taxon>
    </lineage>
</organism>